<keyword id="KW-0049">Antioxidant</keyword>
<keyword id="KW-0963">Cytoplasm</keyword>
<keyword id="KW-1015">Disulfide bond</keyword>
<keyword id="KW-0560">Oxidoreductase</keyword>
<keyword id="KW-0575">Peroxidase</keyword>
<keyword id="KW-0676">Redox-active center</keyword>
<keyword id="KW-1185">Reference proteome</keyword>
<gene>
    <name type="primary">ahpC</name>
    <name type="ordered locus">SERP0060</name>
</gene>
<evidence type="ECO:0000250" key="1">
    <source>
        <dbReference type="UniProtKB" id="P0A251"/>
    </source>
</evidence>
<evidence type="ECO:0000250" key="2">
    <source>
        <dbReference type="UniProtKB" id="P0AE08"/>
    </source>
</evidence>
<evidence type="ECO:0000255" key="3">
    <source>
        <dbReference type="PROSITE-ProRule" id="PRU00691"/>
    </source>
</evidence>
<evidence type="ECO:0000305" key="4"/>
<name>AHPC_STAEQ</name>
<comment type="function">
    <text evidence="1">Thiol-specific peroxidase that catalyzes the reduction of hydrogen peroxide and organic hydroperoxides to water and alcohols, respectively. Plays a role in cell protection against oxidative stress by detoxifying peroxides.</text>
</comment>
<comment type="catalytic activity">
    <reaction evidence="1">
        <text>a hydroperoxide + NADH + H(+) = an alcohol + NAD(+) + H2O</text>
        <dbReference type="Rhea" id="RHEA:62628"/>
        <dbReference type="ChEBI" id="CHEBI:15377"/>
        <dbReference type="ChEBI" id="CHEBI:15378"/>
        <dbReference type="ChEBI" id="CHEBI:30879"/>
        <dbReference type="ChEBI" id="CHEBI:35924"/>
        <dbReference type="ChEBI" id="CHEBI:57540"/>
        <dbReference type="ChEBI" id="CHEBI:57945"/>
        <dbReference type="EC" id="1.11.1.26"/>
    </reaction>
</comment>
<comment type="subunit">
    <text evidence="1">Homodimer; disulfide-linked, upon oxidation. 5 homodimers assemble to form a ring-like decamer.</text>
</comment>
<comment type="subcellular location">
    <subcellularLocation>
        <location evidence="2">Cytoplasm</location>
    </subcellularLocation>
</comment>
<comment type="miscellaneous">
    <text evidence="1">The active site is a conserved redox-active cysteine residue, the peroxidatic cysteine (C(P)), which makes the nucleophilic attack on the peroxide substrate. The peroxide oxidizes the C(P)-SH to cysteine sulfenic acid (C(P)-SOH), which then reacts with another cysteine residue, the resolving cysteine (C(R)), to form a disulfide bridge. The disulfide is subsequently reduced by an appropriate electron donor to complete the catalytic cycle. In this typical 2-Cys peroxiredoxin, C(R) is provided by the other dimeric subunit to form an intersubunit disulfide. The disulfide is subsequently reduced by AhpF.</text>
</comment>
<comment type="similarity">
    <text evidence="4">Belongs to the peroxiredoxin family. AhpC/Prx1 subfamily.</text>
</comment>
<dbReference type="EC" id="1.11.1.26" evidence="1"/>
<dbReference type="EMBL" id="CP000029">
    <property type="protein sequence ID" value="AAW53451.1"/>
    <property type="molecule type" value="Genomic_DNA"/>
</dbReference>
<dbReference type="RefSeq" id="WP_002437170.1">
    <property type="nucleotide sequence ID" value="NC_002976.3"/>
</dbReference>
<dbReference type="SMR" id="Q5HRY1"/>
<dbReference type="STRING" id="176279.SERP0060"/>
<dbReference type="GeneID" id="50019668"/>
<dbReference type="KEGG" id="ser:SERP0060"/>
<dbReference type="eggNOG" id="COG0450">
    <property type="taxonomic scope" value="Bacteria"/>
</dbReference>
<dbReference type="HOGENOM" id="CLU_042529_21_3_9"/>
<dbReference type="Proteomes" id="UP000000531">
    <property type="component" value="Chromosome"/>
</dbReference>
<dbReference type="GO" id="GO:0005829">
    <property type="term" value="C:cytosol"/>
    <property type="evidence" value="ECO:0007669"/>
    <property type="project" value="TreeGrafter"/>
</dbReference>
<dbReference type="GO" id="GO:0102039">
    <property type="term" value="F:NADH-dependent peroxiredoxin activity"/>
    <property type="evidence" value="ECO:0007669"/>
    <property type="project" value="UniProtKB-EC"/>
</dbReference>
<dbReference type="GO" id="GO:0008379">
    <property type="term" value="F:thioredoxin peroxidase activity"/>
    <property type="evidence" value="ECO:0007669"/>
    <property type="project" value="TreeGrafter"/>
</dbReference>
<dbReference type="GO" id="GO:0045454">
    <property type="term" value="P:cell redox homeostasis"/>
    <property type="evidence" value="ECO:0007669"/>
    <property type="project" value="TreeGrafter"/>
</dbReference>
<dbReference type="GO" id="GO:0033554">
    <property type="term" value="P:cellular response to stress"/>
    <property type="evidence" value="ECO:0007669"/>
    <property type="project" value="TreeGrafter"/>
</dbReference>
<dbReference type="GO" id="GO:0042744">
    <property type="term" value="P:hydrogen peroxide catabolic process"/>
    <property type="evidence" value="ECO:0007669"/>
    <property type="project" value="TreeGrafter"/>
</dbReference>
<dbReference type="GO" id="GO:0006979">
    <property type="term" value="P:response to oxidative stress"/>
    <property type="evidence" value="ECO:0007669"/>
    <property type="project" value="InterPro"/>
</dbReference>
<dbReference type="CDD" id="cd03015">
    <property type="entry name" value="PRX_Typ2cys"/>
    <property type="match status" value="1"/>
</dbReference>
<dbReference type="FunFam" id="3.40.30.10:FF:000002">
    <property type="entry name" value="Alkyl hydroperoxide reductase C"/>
    <property type="match status" value="1"/>
</dbReference>
<dbReference type="Gene3D" id="3.40.30.10">
    <property type="entry name" value="Glutaredoxin"/>
    <property type="match status" value="1"/>
</dbReference>
<dbReference type="InterPro" id="IPR017559">
    <property type="entry name" value="AhpC"/>
</dbReference>
<dbReference type="InterPro" id="IPR000866">
    <property type="entry name" value="AhpC/TSA"/>
</dbReference>
<dbReference type="InterPro" id="IPR050217">
    <property type="entry name" value="Peroxiredoxin"/>
</dbReference>
<dbReference type="InterPro" id="IPR024706">
    <property type="entry name" value="Peroxiredoxin_AhpC-typ"/>
</dbReference>
<dbReference type="InterPro" id="IPR019479">
    <property type="entry name" value="Peroxiredoxin_C"/>
</dbReference>
<dbReference type="InterPro" id="IPR036249">
    <property type="entry name" value="Thioredoxin-like_sf"/>
</dbReference>
<dbReference type="InterPro" id="IPR013766">
    <property type="entry name" value="Thioredoxin_domain"/>
</dbReference>
<dbReference type="NCBIfam" id="TIGR03137">
    <property type="entry name" value="AhpC"/>
    <property type="match status" value="1"/>
</dbReference>
<dbReference type="PANTHER" id="PTHR10681:SF121">
    <property type="entry name" value="ALKYL HYDROPEROXIDE REDUCTASE C"/>
    <property type="match status" value="1"/>
</dbReference>
<dbReference type="PANTHER" id="PTHR10681">
    <property type="entry name" value="THIOREDOXIN PEROXIDASE"/>
    <property type="match status" value="1"/>
</dbReference>
<dbReference type="Pfam" id="PF10417">
    <property type="entry name" value="1-cysPrx_C"/>
    <property type="match status" value="1"/>
</dbReference>
<dbReference type="Pfam" id="PF00578">
    <property type="entry name" value="AhpC-TSA"/>
    <property type="match status" value="1"/>
</dbReference>
<dbReference type="PIRSF" id="PIRSF000239">
    <property type="entry name" value="AHPC"/>
    <property type="match status" value="1"/>
</dbReference>
<dbReference type="SUPFAM" id="SSF52833">
    <property type="entry name" value="Thioredoxin-like"/>
    <property type="match status" value="1"/>
</dbReference>
<dbReference type="PROSITE" id="PS51352">
    <property type="entry name" value="THIOREDOXIN_2"/>
    <property type="match status" value="1"/>
</dbReference>
<sequence length="189" mass="21100">MSLINKEILPFTAQAYDPKKDEFKEVTQEDFKGSWNVVCFYPADFSFVCPTELEDLQNQYAKLQELGVNVYSVSTDTHFVHKAWHDHSDAISKLEYSMIGDPSQTITRNFDVLDEETGLAQRGTFIIDPDGVVQAAEINADGIGRDASTLVNKIKAAQYVRQHPGEVCPAKWEEGSESLQPGLDLVGKI</sequence>
<organism>
    <name type="scientific">Staphylococcus epidermidis (strain ATCC 35984 / DSM 28319 / BCRC 17069 / CCUG 31568 / BM 3577 / RP62A)</name>
    <dbReference type="NCBI Taxonomy" id="176279"/>
    <lineage>
        <taxon>Bacteria</taxon>
        <taxon>Bacillati</taxon>
        <taxon>Bacillota</taxon>
        <taxon>Bacilli</taxon>
        <taxon>Bacillales</taxon>
        <taxon>Staphylococcaceae</taxon>
        <taxon>Staphylococcus</taxon>
    </lineage>
</organism>
<proteinExistence type="inferred from homology"/>
<protein>
    <recommendedName>
        <fullName>Alkyl hydroperoxide reductase C</fullName>
        <ecNumber evidence="1">1.11.1.26</ecNumber>
    </recommendedName>
    <alternativeName>
        <fullName>Peroxiredoxin</fullName>
    </alternativeName>
    <alternativeName>
        <fullName>Thioredoxin peroxidase</fullName>
    </alternativeName>
</protein>
<accession>Q5HRY1</accession>
<reference key="1">
    <citation type="journal article" date="2005" name="J. Bacteriol.">
        <title>Insights on evolution of virulence and resistance from the complete genome analysis of an early methicillin-resistant Staphylococcus aureus strain and a biofilm-producing methicillin-resistant Staphylococcus epidermidis strain.</title>
        <authorList>
            <person name="Gill S.R."/>
            <person name="Fouts D.E."/>
            <person name="Archer G.L."/>
            <person name="Mongodin E.F."/>
            <person name="DeBoy R.T."/>
            <person name="Ravel J."/>
            <person name="Paulsen I.T."/>
            <person name="Kolonay J.F."/>
            <person name="Brinkac L.M."/>
            <person name="Beanan M.J."/>
            <person name="Dodson R.J."/>
            <person name="Daugherty S.C."/>
            <person name="Madupu R."/>
            <person name="Angiuoli S.V."/>
            <person name="Durkin A.S."/>
            <person name="Haft D.H."/>
            <person name="Vamathevan J.J."/>
            <person name="Khouri H."/>
            <person name="Utterback T.R."/>
            <person name="Lee C."/>
            <person name="Dimitrov G."/>
            <person name="Jiang L."/>
            <person name="Qin H."/>
            <person name="Weidman J."/>
            <person name="Tran K."/>
            <person name="Kang K.H."/>
            <person name="Hance I.R."/>
            <person name="Nelson K.E."/>
            <person name="Fraser C.M."/>
        </authorList>
    </citation>
    <scope>NUCLEOTIDE SEQUENCE [LARGE SCALE GENOMIC DNA]</scope>
    <source>
        <strain>ATCC 35984 / DSM 28319 / BCRC 17069 / CCUG 31568 / BM 3577 / RP62A</strain>
    </source>
</reference>
<feature type="chain" id="PRO_0000135130" description="Alkyl hydroperoxide reductase C">
    <location>
        <begin position="1"/>
        <end position="189"/>
    </location>
</feature>
<feature type="domain" description="Thioredoxin" evidence="3">
    <location>
        <begin position="2"/>
        <end position="159"/>
    </location>
</feature>
<feature type="active site" description="Cysteine sulfenic acid (-SOH) intermediate" evidence="1">
    <location>
        <position position="49"/>
    </location>
</feature>
<feature type="disulfide bond" description="Interchain (with C-168); in linked form" evidence="1">
    <location>
        <position position="49"/>
    </location>
</feature>
<feature type="disulfide bond" description="Interchain (with C-49); in linked form" evidence="1">
    <location>
        <position position="168"/>
    </location>
</feature>